<proteinExistence type="evidence at protein level"/>
<accession>P22615</accession>
<gene>
    <name type="primary">cmlA</name>
</gene>
<protein>
    <recommendedName>
        <fullName>Chloramphenicol acetyltransferase 2</fullName>
        <ecNumber>2.3.1.28</ecNumber>
    </recommendedName>
    <alternativeName>
        <fullName>Chloramphenicol acetyltransferase II</fullName>
        <shortName>CAT-II</shortName>
    </alternativeName>
</protein>
<dbReference type="EC" id="2.3.1.28"/>
<dbReference type="EMBL" id="X53796">
    <property type="protein sequence ID" value="CAA37805.1"/>
    <property type="molecule type" value="Genomic_DNA"/>
</dbReference>
<dbReference type="PIR" id="S13398">
    <property type="entry name" value="S13398"/>
</dbReference>
<dbReference type="SMR" id="P22615"/>
<dbReference type="CARD" id="ARO:3004656">
    <property type="molecule name" value="Ecol_catII"/>
    <property type="mechanism identifier" value="ARO:0001004"/>
    <property type="mechanism name" value="antibiotic inactivation"/>
</dbReference>
<dbReference type="KEGG" id="ag:CAA37805"/>
<dbReference type="GO" id="GO:0008811">
    <property type="term" value="F:chloramphenicol O-acetyltransferase activity"/>
    <property type="evidence" value="ECO:0007669"/>
    <property type="project" value="UniProtKB-EC"/>
</dbReference>
<dbReference type="GO" id="GO:0046677">
    <property type="term" value="P:response to antibiotic"/>
    <property type="evidence" value="ECO:0007669"/>
    <property type="project" value="UniProtKB-KW"/>
</dbReference>
<dbReference type="Gene3D" id="3.30.559.10">
    <property type="entry name" value="Chloramphenicol acetyltransferase-like domain"/>
    <property type="match status" value="1"/>
</dbReference>
<dbReference type="InterPro" id="IPR023213">
    <property type="entry name" value="CAT-like_dom_sf"/>
</dbReference>
<dbReference type="InterPro" id="IPR018372">
    <property type="entry name" value="Chloramphenicol_AcTrfase_AS"/>
</dbReference>
<dbReference type="InterPro" id="IPR001707">
    <property type="entry name" value="Cmp_AcTrfase"/>
</dbReference>
<dbReference type="NCBIfam" id="NF000491">
    <property type="entry name" value="chloram_CatA"/>
    <property type="match status" value="1"/>
</dbReference>
<dbReference type="PANTHER" id="PTHR38474:SF2">
    <property type="entry name" value="CHLORAMPHENICOL ACETYLTRANSFERASE"/>
    <property type="match status" value="1"/>
</dbReference>
<dbReference type="PANTHER" id="PTHR38474">
    <property type="entry name" value="SLR0299 PROTEIN"/>
    <property type="match status" value="1"/>
</dbReference>
<dbReference type="Pfam" id="PF00302">
    <property type="entry name" value="CAT"/>
    <property type="match status" value="1"/>
</dbReference>
<dbReference type="PIRSF" id="PIRSF000440">
    <property type="entry name" value="CAT"/>
    <property type="match status" value="1"/>
</dbReference>
<dbReference type="SMART" id="SM01059">
    <property type="entry name" value="CAT"/>
    <property type="match status" value="1"/>
</dbReference>
<dbReference type="SUPFAM" id="SSF52777">
    <property type="entry name" value="CoA-dependent acyltransferases"/>
    <property type="match status" value="1"/>
</dbReference>
<dbReference type="PROSITE" id="PS00100">
    <property type="entry name" value="CAT"/>
    <property type="match status" value="1"/>
</dbReference>
<comment type="function">
    <text>This enzyme is an effector of chloramphenicol resistance in bacteria.</text>
</comment>
<comment type="catalytic activity">
    <reaction evidence="1">
        <text>chloramphenicol + acetyl-CoA = chloramphenicol 3-acetate + CoA</text>
        <dbReference type="Rhea" id="RHEA:18421"/>
        <dbReference type="ChEBI" id="CHEBI:16730"/>
        <dbReference type="ChEBI" id="CHEBI:17698"/>
        <dbReference type="ChEBI" id="CHEBI:57287"/>
        <dbReference type="ChEBI" id="CHEBI:57288"/>
        <dbReference type="EC" id="2.3.1.28"/>
    </reaction>
</comment>
<comment type="subunit">
    <text>Homotrimer.</text>
</comment>
<comment type="miscellaneous">
    <text>Type II chloramphenicol acetyltransferases are sensitive to inhibition by thiol-reactive reagents. The inactivation occurs as a result of chemical modification of Cys-26.</text>
</comment>
<comment type="similarity">
    <text evidence="2">Belongs to the chloramphenicol acetyltransferase family.</text>
</comment>
<geneLocation type="plasmid">
    <name>IncW pSa</name>
</geneLocation>
<organism>
    <name type="scientific">Escherichia coli</name>
    <dbReference type="NCBI Taxonomy" id="562"/>
    <lineage>
        <taxon>Bacteria</taxon>
        <taxon>Pseudomonadati</taxon>
        <taxon>Pseudomonadota</taxon>
        <taxon>Gammaproteobacteria</taxon>
        <taxon>Enterobacterales</taxon>
        <taxon>Enterobacteriaceae</taxon>
        <taxon>Escherichia</taxon>
    </lineage>
</organism>
<name>CAT2_ECOLX</name>
<keyword id="KW-0012">Acyltransferase</keyword>
<keyword id="KW-0046">Antibiotic resistance</keyword>
<keyword id="KW-0903">Direct protein sequencing</keyword>
<keyword id="KW-0614">Plasmid</keyword>
<keyword id="KW-0808">Transferase</keyword>
<feature type="chain" id="PRO_0000165875" description="Chloramphenicol acetyltransferase 2">
    <location>
        <begin position="1"/>
        <end position="213"/>
    </location>
</feature>
<feature type="active site" description="Proton acceptor" evidence="1">
    <location>
        <position position="189"/>
    </location>
</feature>
<sequence length="213" mass="24778">MNFTRIDLNTWNRREHFALYRQQIKCGFSLTTKLDITALRTALAETGYKFYPLMIYLISRAVNQFPEFRMALKDNELIYWDQSDPVFTVFHKETETFSALSCRYFPDLSEFMAGYNAVTAEYQHDTRLFPQGNLPENHLNISSLPWVSFDGFNLNITGNDDYFAPVFTMAKFQQEGDRVLLPVSVQVHHAVCDGFHAARFINTLQLMCDNILK</sequence>
<reference key="1">
    <citation type="journal article" date="1990" name="Biochem. J.">
        <title>Nucleotide sequences of genes encoding the type II chloramphenicol acetyltransferases of Escherichia coli and Haemophilus influenzae, which are sensitive to inhibition by thiol-reactive reagents.</title>
        <authorList>
            <person name="Murray I.A."/>
            <person name="Martinez-Suarez J.V."/>
            <person name="Close T.J."/>
            <person name="Shaw W.V."/>
        </authorList>
    </citation>
    <scope>NUCLEOTIDE SEQUENCE [GENOMIC DNA]</scope>
    <scope>PARTIAL PROTEIN SEQUENCE</scope>
</reference>
<evidence type="ECO:0000255" key="1">
    <source>
        <dbReference type="PROSITE-ProRule" id="PRU10021"/>
    </source>
</evidence>
<evidence type="ECO:0000305" key="2"/>